<protein>
    <recommendedName>
        <fullName evidence="3">Glucosamine-6-phosphate deaminase 1</fullName>
        <shortName>GNPDA 1</shortName>
        <shortName>GlcN6P deaminase 1</shortName>
        <ecNumber evidence="3">3.5.99.6</ecNumber>
    </recommendedName>
    <alternativeName>
        <fullName evidence="3">Glucosamine-6-phosphate isomerase 1</fullName>
    </alternativeName>
</protein>
<keyword id="KW-0119">Carbohydrate metabolism</keyword>
<keyword id="KW-0963">Cytoplasm</keyword>
<keyword id="KW-0378">Hydrolase</keyword>
<gene>
    <name type="primary">GPI1</name>
</gene>
<comment type="function">
    <text evidence="3">Catalyzes the reversible conversion of alpha-D-glucosamine 6-phosphate (GlcN-6P) into beta-D-fructose 6-phosphate (Fru-6P) and ammonium ion, a regulatory reaction step in de novo uridine diphosphate-N-acetyl-alpha-D-glucosamine (UDP-GlcNAc) biosynthesis via hexosamine pathway.</text>
</comment>
<comment type="catalytic activity">
    <reaction evidence="3">
        <text>alpha-D-glucosamine 6-phosphate + H2O = beta-D-fructose 6-phosphate + NH4(+)</text>
        <dbReference type="Rhea" id="RHEA:12172"/>
        <dbReference type="ChEBI" id="CHEBI:15377"/>
        <dbReference type="ChEBI" id="CHEBI:28938"/>
        <dbReference type="ChEBI" id="CHEBI:57634"/>
        <dbReference type="ChEBI" id="CHEBI:75989"/>
        <dbReference type="EC" id="3.5.99.6"/>
    </reaction>
</comment>
<comment type="subunit">
    <text evidence="3">Homohexamer.</text>
</comment>
<comment type="subcellular location">
    <subcellularLocation>
        <location evidence="2">Cytoplasm</location>
    </subcellularLocation>
</comment>
<comment type="similarity">
    <text evidence="4">Belongs to the glucosamine/galactosamine-6-phosphate isomerase family.</text>
</comment>
<sequence length="266" mass="29406">MPSIHVSKCADPAIKLAHRIAEVVRSKPNCVLGLATGSTPIPVYQELARLHREEGLDFSQVRTFNLDEYAGLPPTHDQTYRFFMEEHLFSKVNIKPENVHFLNGMASDYEKECERYEQELKAIGPCDVWLLGIGHNGHIAFNEPGSPRDSRTRVVCLTQSTIDANARFFGNDKSKVPTKALSVGIATIMESREILLLATGESKREAVTKSVKGKCETHCPASFLHEHPHCRFYVDMDAGKVVDNTCCQATNQASCCGSTSCHAAKA</sequence>
<proteinExistence type="inferred from homology"/>
<accession>O97439</accession>
<evidence type="ECO:0000250" key="1"/>
<evidence type="ECO:0000250" key="2">
    <source>
        <dbReference type="UniProtKB" id="O88958"/>
    </source>
</evidence>
<evidence type="ECO:0000250" key="3">
    <source>
        <dbReference type="UniProtKB" id="P46926"/>
    </source>
</evidence>
<evidence type="ECO:0000305" key="4"/>
<organism>
    <name type="scientific">Giardia intestinalis</name>
    <name type="common">Giardia lamblia</name>
    <dbReference type="NCBI Taxonomy" id="5741"/>
    <lineage>
        <taxon>Eukaryota</taxon>
        <taxon>Metamonada</taxon>
        <taxon>Diplomonadida</taxon>
        <taxon>Hexamitidae</taxon>
        <taxon>Giardiinae</taxon>
        <taxon>Giardia</taxon>
    </lineage>
</organism>
<dbReference type="EC" id="3.5.99.6" evidence="3"/>
<dbReference type="EMBL" id="AF050754">
    <property type="protein sequence ID" value="AAD02508.1"/>
    <property type="molecule type" value="Genomic_DNA"/>
</dbReference>
<dbReference type="SMR" id="O97439"/>
<dbReference type="VEuPathDB" id="GiardiaDB:DHA2_152372"/>
<dbReference type="VEuPathDB" id="GiardiaDB:GL50803_008245"/>
<dbReference type="VEuPathDB" id="GiardiaDB:QR46_1821"/>
<dbReference type="eggNOG" id="KOG3148">
    <property type="taxonomic scope" value="Eukaryota"/>
</dbReference>
<dbReference type="BioCyc" id="MetaCyc:MONOMER-13185"/>
<dbReference type="GO" id="GO:0005737">
    <property type="term" value="C:cytoplasm"/>
    <property type="evidence" value="ECO:0007669"/>
    <property type="project" value="UniProtKB-SubCell"/>
</dbReference>
<dbReference type="GO" id="GO:0004342">
    <property type="term" value="F:glucosamine-6-phosphate deaminase activity"/>
    <property type="evidence" value="ECO:0007669"/>
    <property type="project" value="UniProtKB-EC"/>
</dbReference>
<dbReference type="GO" id="GO:0042802">
    <property type="term" value="F:identical protein binding"/>
    <property type="evidence" value="ECO:0007669"/>
    <property type="project" value="TreeGrafter"/>
</dbReference>
<dbReference type="GO" id="GO:0005975">
    <property type="term" value="P:carbohydrate metabolic process"/>
    <property type="evidence" value="ECO:0007669"/>
    <property type="project" value="InterPro"/>
</dbReference>
<dbReference type="GO" id="GO:0006043">
    <property type="term" value="P:glucosamine catabolic process"/>
    <property type="evidence" value="ECO:0007669"/>
    <property type="project" value="TreeGrafter"/>
</dbReference>
<dbReference type="GO" id="GO:0006046">
    <property type="term" value="P:N-acetylglucosamine catabolic process"/>
    <property type="evidence" value="ECO:0007669"/>
    <property type="project" value="TreeGrafter"/>
</dbReference>
<dbReference type="GO" id="GO:0019262">
    <property type="term" value="P:N-acetylneuraminate catabolic process"/>
    <property type="evidence" value="ECO:0007669"/>
    <property type="project" value="TreeGrafter"/>
</dbReference>
<dbReference type="CDD" id="cd01399">
    <property type="entry name" value="GlcN6P_deaminase"/>
    <property type="match status" value="1"/>
</dbReference>
<dbReference type="FunFam" id="3.40.50.1360:FF:000003">
    <property type="entry name" value="Glucosamine-6-phosphate deaminase"/>
    <property type="match status" value="1"/>
</dbReference>
<dbReference type="Gene3D" id="3.40.50.1360">
    <property type="match status" value="1"/>
</dbReference>
<dbReference type="HAMAP" id="MF_01241">
    <property type="entry name" value="GlcN6P_deamin"/>
    <property type="match status" value="1"/>
</dbReference>
<dbReference type="InterPro" id="IPR006148">
    <property type="entry name" value="Glc/Gal-6P_isomerase"/>
</dbReference>
<dbReference type="InterPro" id="IPR004547">
    <property type="entry name" value="Glucosamine6P_isomerase"/>
</dbReference>
<dbReference type="InterPro" id="IPR018321">
    <property type="entry name" value="Glucosamine6P_isomerase_CS"/>
</dbReference>
<dbReference type="InterPro" id="IPR037171">
    <property type="entry name" value="NagB/RpiA_transferase-like"/>
</dbReference>
<dbReference type="NCBIfam" id="TIGR00502">
    <property type="entry name" value="nagB"/>
    <property type="match status" value="1"/>
</dbReference>
<dbReference type="PANTHER" id="PTHR11280">
    <property type="entry name" value="GLUCOSAMINE-6-PHOSPHATE ISOMERASE"/>
    <property type="match status" value="1"/>
</dbReference>
<dbReference type="PANTHER" id="PTHR11280:SF5">
    <property type="entry name" value="GLUCOSAMINE-6-PHOSPHATE ISOMERASE"/>
    <property type="match status" value="1"/>
</dbReference>
<dbReference type="Pfam" id="PF01182">
    <property type="entry name" value="Glucosamine_iso"/>
    <property type="match status" value="1"/>
</dbReference>
<dbReference type="SUPFAM" id="SSF100950">
    <property type="entry name" value="NagB/RpiA/CoA transferase-like"/>
    <property type="match status" value="1"/>
</dbReference>
<dbReference type="PROSITE" id="PS01161">
    <property type="entry name" value="GLC_GALNAC_ISOMERASE"/>
    <property type="match status" value="1"/>
</dbReference>
<name>GNPI1_GIAIN</name>
<reference key="1">
    <citation type="submission" date="1998-02" db="EMBL/GenBank/DDBJ databases">
        <title>Cloning of two Giardia glucosamine 6-phosphate isomerase genes only one of which is transcriptionally activated during encystment.</title>
        <authorList>
            <person name="van Keulen H."/>
            <person name="Steimle P.A."/>
            <person name="Bulik D.A."/>
            <person name="Borowiak R.K."/>
            <person name="Jarroll E.L."/>
        </authorList>
    </citation>
    <scope>NUCLEOTIDE SEQUENCE [GENOMIC DNA]</scope>
    <source>
        <strain>MR4 / Polish genotype</strain>
    </source>
</reference>
<feature type="chain" id="PRO_0000160127" description="Glucosamine-6-phosphate deaminase 1">
    <location>
        <begin position="1"/>
        <end position="266"/>
    </location>
</feature>
<feature type="active site" description="Proton acceptor; for enolization step" evidence="1">
    <location>
        <position position="67"/>
    </location>
</feature>
<feature type="active site" description="For ring-opening step" evidence="1">
    <location>
        <position position="136"/>
    </location>
</feature>
<feature type="active site" description="Proton acceptor; for ring-opening step" evidence="1">
    <location>
        <position position="138"/>
    </location>
</feature>
<feature type="active site" description="For ring-opening step" evidence="1">
    <location>
        <position position="143"/>
    </location>
</feature>